<dbReference type="EC" id="6.3.4.5" evidence="1"/>
<dbReference type="EMBL" id="AE017340">
    <property type="protein sequence ID" value="AAV81456.1"/>
    <property type="molecule type" value="Genomic_DNA"/>
</dbReference>
<dbReference type="RefSeq" id="WP_011233871.1">
    <property type="nucleotide sequence ID" value="NC_006512.1"/>
</dbReference>
<dbReference type="SMR" id="Q5QWZ9"/>
<dbReference type="STRING" id="283942.IL0615"/>
<dbReference type="GeneID" id="41335766"/>
<dbReference type="KEGG" id="ilo:IL0615"/>
<dbReference type="eggNOG" id="COG0137">
    <property type="taxonomic scope" value="Bacteria"/>
</dbReference>
<dbReference type="HOGENOM" id="CLU_032784_4_2_6"/>
<dbReference type="OrthoDB" id="9801641at2"/>
<dbReference type="UniPathway" id="UPA00068">
    <property type="reaction ID" value="UER00113"/>
</dbReference>
<dbReference type="Proteomes" id="UP000001171">
    <property type="component" value="Chromosome"/>
</dbReference>
<dbReference type="GO" id="GO:0005737">
    <property type="term" value="C:cytoplasm"/>
    <property type="evidence" value="ECO:0007669"/>
    <property type="project" value="UniProtKB-SubCell"/>
</dbReference>
<dbReference type="GO" id="GO:0004055">
    <property type="term" value="F:argininosuccinate synthase activity"/>
    <property type="evidence" value="ECO:0007669"/>
    <property type="project" value="UniProtKB-UniRule"/>
</dbReference>
<dbReference type="GO" id="GO:0005524">
    <property type="term" value="F:ATP binding"/>
    <property type="evidence" value="ECO:0007669"/>
    <property type="project" value="UniProtKB-UniRule"/>
</dbReference>
<dbReference type="GO" id="GO:0000053">
    <property type="term" value="P:argininosuccinate metabolic process"/>
    <property type="evidence" value="ECO:0007669"/>
    <property type="project" value="TreeGrafter"/>
</dbReference>
<dbReference type="GO" id="GO:0006526">
    <property type="term" value="P:L-arginine biosynthetic process"/>
    <property type="evidence" value="ECO:0007669"/>
    <property type="project" value="UniProtKB-UniRule"/>
</dbReference>
<dbReference type="GO" id="GO:0000050">
    <property type="term" value="P:urea cycle"/>
    <property type="evidence" value="ECO:0007669"/>
    <property type="project" value="TreeGrafter"/>
</dbReference>
<dbReference type="CDD" id="cd01999">
    <property type="entry name" value="ASS"/>
    <property type="match status" value="1"/>
</dbReference>
<dbReference type="FunFam" id="3.40.50.620:FF:000019">
    <property type="entry name" value="Argininosuccinate synthase"/>
    <property type="match status" value="1"/>
</dbReference>
<dbReference type="FunFam" id="3.90.1260.10:FF:000007">
    <property type="entry name" value="Argininosuccinate synthase"/>
    <property type="match status" value="1"/>
</dbReference>
<dbReference type="Gene3D" id="3.90.1260.10">
    <property type="entry name" value="Argininosuccinate synthetase, chain A, domain 2"/>
    <property type="match status" value="1"/>
</dbReference>
<dbReference type="Gene3D" id="3.40.50.620">
    <property type="entry name" value="HUPs"/>
    <property type="match status" value="1"/>
</dbReference>
<dbReference type="Gene3D" id="1.20.5.470">
    <property type="entry name" value="Single helix bin"/>
    <property type="match status" value="1"/>
</dbReference>
<dbReference type="HAMAP" id="MF_00005">
    <property type="entry name" value="Arg_succ_synth_type1"/>
    <property type="match status" value="1"/>
</dbReference>
<dbReference type="InterPro" id="IPR048268">
    <property type="entry name" value="Arginosuc_syn_C"/>
</dbReference>
<dbReference type="InterPro" id="IPR048267">
    <property type="entry name" value="Arginosuc_syn_N"/>
</dbReference>
<dbReference type="InterPro" id="IPR001518">
    <property type="entry name" value="Arginosuc_synth"/>
</dbReference>
<dbReference type="InterPro" id="IPR018223">
    <property type="entry name" value="Arginosuc_synth_CS"/>
</dbReference>
<dbReference type="InterPro" id="IPR023434">
    <property type="entry name" value="Arginosuc_synth_type_1_subfam"/>
</dbReference>
<dbReference type="InterPro" id="IPR024074">
    <property type="entry name" value="AS_cat/multimer_dom_body"/>
</dbReference>
<dbReference type="InterPro" id="IPR014729">
    <property type="entry name" value="Rossmann-like_a/b/a_fold"/>
</dbReference>
<dbReference type="NCBIfam" id="TIGR00032">
    <property type="entry name" value="argG"/>
    <property type="match status" value="1"/>
</dbReference>
<dbReference type="NCBIfam" id="NF001770">
    <property type="entry name" value="PRK00509.1"/>
    <property type="match status" value="1"/>
</dbReference>
<dbReference type="PANTHER" id="PTHR11587">
    <property type="entry name" value="ARGININOSUCCINATE SYNTHASE"/>
    <property type="match status" value="1"/>
</dbReference>
<dbReference type="PANTHER" id="PTHR11587:SF2">
    <property type="entry name" value="ARGININOSUCCINATE SYNTHASE"/>
    <property type="match status" value="1"/>
</dbReference>
<dbReference type="Pfam" id="PF20979">
    <property type="entry name" value="Arginosuc_syn_C"/>
    <property type="match status" value="1"/>
</dbReference>
<dbReference type="Pfam" id="PF00764">
    <property type="entry name" value="Arginosuc_synth"/>
    <property type="match status" value="1"/>
</dbReference>
<dbReference type="SUPFAM" id="SSF52402">
    <property type="entry name" value="Adenine nucleotide alpha hydrolases-like"/>
    <property type="match status" value="1"/>
</dbReference>
<dbReference type="SUPFAM" id="SSF69864">
    <property type="entry name" value="Argininosuccinate synthetase, C-terminal domain"/>
    <property type="match status" value="1"/>
</dbReference>
<dbReference type="PROSITE" id="PS00564">
    <property type="entry name" value="ARGININOSUCCIN_SYN_1"/>
    <property type="match status" value="1"/>
</dbReference>
<dbReference type="PROSITE" id="PS00565">
    <property type="entry name" value="ARGININOSUCCIN_SYN_2"/>
    <property type="match status" value="1"/>
</dbReference>
<sequence length="403" mass="43887">MSNVKKVVLAYSGGLDTSAIVPWLKENYGCEVVAFVADVGQGAEELEGVEEKAKASGASECHVVDLKDEFVKNYVYPTLKTGAIYEGTYLLGTAMARPIIAKAQVEVARKVGADALSHGCTGKGNDQVRFESCYAALAPDLQVIAPWREWELSSRESLLGYLAERNIPCSASATKIYSRDANAWHISHEGGELEDPWCEPTEKVWTMTASPEQAPDKPEYLCVTVENGEIVAVNNQALSPFECLSVLNDVAAKHGVGRVDIVENRLVGMKSRGCYETPGGTVMMAALQAIDELVLDKVSRSWKTQLSEQFAQLLYDGRWFTPLQQSVMAAAQSLCATASGEVVLKLYKGSVTAVQKRSPHSLYSEDFATFGADEVYNQAHAEGFIRLFSLPSRIAALQKQQKG</sequence>
<name>ASSY_IDILO</name>
<reference key="1">
    <citation type="journal article" date="2004" name="Proc. Natl. Acad. Sci. U.S.A.">
        <title>Genome sequence of the deep-sea gamma-proteobacterium Idiomarina loihiensis reveals amino acid fermentation as a source of carbon and energy.</title>
        <authorList>
            <person name="Hou S."/>
            <person name="Saw J.H."/>
            <person name="Lee K.S."/>
            <person name="Freitas T.A."/>
            <person name="Belisle C."/>
            <person name="Kawarabayasi Y."/>
            <person name="Donachie S.P."/>
            <person name="Pikina A."/>
            <person name="Galperin M.Y."/>
            <person name="Koonin E.V."/>
            <person name="Makarova K.S."/>
            <person name="Omelchenko M.V."/>
            <person name="Sorokin A."/>
            <person name="Wolf Y.I."/>
            <person name="Li Q.X."/>
            <person name="Keum Y.S."/>
            <person name="Campbell S."/>
            <person name="Denery J."/>
            <person name="Aizawa S."/>
            <person name="Shibata S."/>
            <person name="Malahoff A."/>
            <person name="Alam M."/>
        </authorList>
    </citation>
    <scope>NUCLEOTIDE SEQUENCE [LARGE SCALE GENOMIC DNA]</scope>
    <source>
        <strain>ATCC BAA-735 / DSM 15497 / L2-TR</strain>
    </source>
</reference>
<comment type="catalytic activity">
    <reaction evidence="1">
        <text>L-citrulline + L-aspartate + ATP = 2-(N(omega)-L-arginino)succinate + AMP + diphosphate + H(+)</text>
        <dbReference type="Rhea" id="RHEA:10932"/>
        <dbReference type="ChEBI" id="CHEBI:15378"/>
        <dbReference type="ChEBI" id="CHEBI:29991"/>
        <dbReference type="ChEBI" id="CHEBI:30616"/>
        <dbReference type="ChEBI" id="CHEBI:33019"/>
        <dbReference type="ChEBI" id="CHEBI:57472"/>
        <dbReference type="ChEBI" id="CHEBI:57743"/>
        <dbReference type="ChEBI" id="CHEBI:456215"/>
        <dbReference type="EC" id="6.3.4.5"/>
    </reaction>
</comment>
<comment type="pathway">
    <text evidence="1">Amino-acid biosynthesis; L-arginine biosynthesis; L-arginine from L-ornithine and carbamoyl phosphate: step 2/3.</text>
</comment>
<comment type="subunit">
    <text evidence="1">Homotetramer.</text>
</comment>
<comment type="subcellular location">
    <subcellularLocation>
        <location evidence="1">Cytoplasm</location>
    </subcellularLocation>
</comment>
<comment type="similarity">
    <text evidence="1">Belongs to the argininosuccinate synthase family. Type 1 subfamily.</text>
</comment>
<feature type="chain" id="PRO_0000148599" description="Argininosuccinate synthase">
    <location>
        <begin position="1"/>
        <end position="403"/>
    </location>
</feature>
<feature type="binding site" evidence="1">
    <location>
        <begin position="10"/>
        <end position="18"/>
    </location>
    <ligand>
        <name>ATP</name>
        <dbReference type="ChEBI" id="CHEBI:30616"/>
    </ligand>
</feature>
<feature type="binding site" evidence="1">
    <location>
        <position position="37"/>
    </location>
    <ligand>
        <name>ATP</name>
        <dbReference type="ChEBI" id="CHEBI:30616"/>
    </ligand>
</feature>
<feature type="binding site" evidence="1">
    <location>
        <position position="89"/>
    </location>
    <ligand>
        <name>L-citrulline</name>
        <dbReference type="ChEBI" id="CHEBI:57743"/>
    </ligand>
</feature>
<feature type="binding site" evidence="1">
    <location>
        <position position="119"/>
    </location>
    <ligand>
        <name>ATP</name>
        <dbReference type="ChEBI" id="CHEBI:30616"/>
    </ligand>
</feature>
<feature type="binding site" evidence="1">
    <location>
        <position position="121"/>
    </location>
    <ligand>
        <name>L-aspartate</name>
        <dbReference type="ChEBI" id="CHEBI:29991"/>
    </ligand>
</feature>
<feature type="binding site" evidence="1">
    <location>
        <position position="125"/>
    </location>
    <ligand>
        <name>L-aspartate</name>
        <dbReference type="ChEBI" id="CHEBI:29991"/>
    </ligand>
</feature>
<feature type="binding site" evidence="1">
    <location>
        <position position="125"/>
    </location>
    <ligand>
        <name>L-citrulline</name>
        <dbReference type="ChEBI" id="CHEBI:57743"/>
    </ligand>
</feature>
<feature type="binding site" evidence="1">
    <location>
        <position position="126"/>
    </location>
    <ligand>
        <name>L-aspartate</name>
        <dbReference type="ChEBI" id="CHEBI:29991"/>
    </ligand>
</feature>
<feature type="binding site" evidence="1">
    <location>
        <position position="129"/>
    </location>
    <ligand>
        <name>L-citrulline</name>
        <dbReference type="ChEBI" id="CHEBI:57743"/>
    </ligand>
</feature>
<feature type="binding site" evidence="1">
    <location>
        <position position="178"/>
    </location>
    <ligand>
        <name>L-citrulline</name>
        <dbReference type="ChEBI" id="CHEBI:57743"/>
    </ligand>
</feature>
<feature type="binding site" evidence="1">
    <location>
        <position position="187"/>
    </location>
    <ligand>
        <name>L-citrulline</name>
        <dbReference type="ChEBI" id="CHEBI:57743"/>
    </ligand>
</feature>
<feature type="binding site" evidence="1">
    <location>
        <position position="263"/>
    </location>
    <ligand>
        <name>L-citrulline</name>
        <dbReference type="ChEBI" id="CHEBI:57743"/>
    </ligand>
</feature>
<feature type="binding site" evidence="1">
    <location>
        <position position="275"/>
    </location>
    <ligand>
        <name>L-citrulline</name>
        <dbReference type="ChEBI" id="CHEBI:57743"/>
    </ligand>
</feature>
<protein>
    <recommendedName>
        <fullName evidence="1">Argininosuccinate synthase</fullName>
        <ecNumber evidence="1">6.3.4.5</ecNumber>
    </recommendedName>
    <alternativeName>
        <fullName evidence="1">Citrulline--aspartate ligase</fullName>
    </alternativeName>
</protein>
<gene>
    <name evidence="1" type="primary">argG</name>
    <name type="ordered locus">IL0615</name>
</gene>
<proteinExistence type="inferred from homology"/>
<organism>
    <name type="scientific">Idiomarina loihiensis (strain ATCC BAA-735 / DSM 15497 / L2-TR)</name>
    <dbReference type="NCBI Taxonomy" id="283942"/>
    <lineage>
        <taxon>Bacteria</taxon>
        <taxon>Pseudomonadati</taxon>
        <taxon>Pseudomonadota</taxon>
        <taxon>Gammaproteobacteria</taxon>
        <taxon>Alteromonadales</taxon>
        <taxon>Idiomarinaceae</taxon>
        <taxon>Idiomarina</taxon>
    </lineage>
</organism>
<evidence type="ECO:0000255" key="1">
    <source>
        <dbReference type="HAMAP-Rule" id="MF_00005"/>
    </source>
</evidence>
<keyword id="KW-0028">Amino-acid biosynthesis</keyword>
<keyword id="KW-0055">Arginine biosynthesis</keyword>
<keyword id="KW-0067">ATP-binding</keyword>
<keyword id="KW-0963">Cytoplasm</keyword>
<keyword id="KW-0436">Ligase</keyword>
<keyword id="KW-0547">Nucleotide-binding</keyword>
<keyword id="KW-1185">Reference proteome</keyword>
<accession>Q5QWZ9</accession>